<gene>
    <name evidence="1" type="primary">rpsU</name>
    <name type="ordered locus">NGO_2134</name>
</gene>
<protein>
    <recommendedName>
        <fullName evidence="1">Small ribosomal subunit protein bS21</fullName>
    </recommendedName>
    <alternativeName>
        <fullName evidence="2">30S ribosomal protein S21</fullName>
    </alternativeName>
</protein>
<feature type="chain" id="PRO_0000266711" description="Small ribosomal subunit protein bS21">
    <location>
        <begin position="1"/>
        <end position="70"/>
    </location>
</feature>
<organism>
    <name type="scientific">Neisseria gonorrhoeae (strain ATCC 700825 / FA 1090)</name>
    <dbReference type="NCBI Taxonomy" id="242231"/>
    <lineage>
        <taxon>Bacteria</taxon>
        <taxon>Pseudomonadati</taxon>
        <taxon>Pseudomonadota</taxon>
        <taxon>Betaproteobacteria</taxon>
        <taxon>Neisseriales</taxon>
        <taxon>Neisseriaceae</taxon>
        <taxon>Neisseria</taxon>
    </lineage>
</organism>
<sequence>MPAIRVKENEPFEVAMRRFKRAVEKTGLLTELRAREAYEKPTTERKRKKAAAVKRLQKRLRSQQLPPKMY</sequence>
<evidence type="ECO:0000255" key="1">
    <source>
        <dbReference type="HAMAP-Rule" id="MF_00358"/>
    </source>
</evidence>
<evidence type="ECO:0000305" key="2"/>
<reference key="1">
    <citation type="submission" date="2003-03" db="EMBL/GenBank/DDBJ databases">
        <title>The complete genome sequence of Neisseria gonorrhoeae.</title>
        <authorList>
            <person name="Lewis L.A."/>
            <person name="Gillaspy A.F."/>
            <person name="McLaughlin R.E."/>
            <person name="Gipson M."/>
            <person name="Ducey T.F."/>
            <person name="Ownbey T."/>
            <person name="Hartman K."/>
            <person name="Nydick C."/>
            <person name="Carson M.B."/>
            <person name="Vaughn J."/>
            <person name="Thomson C."/>
            <person name="Song L."/>
            <person name="Lin S."/>
            <person name="Yuan X."/>
            <person name="Najar F."/>
            <person name="Zhan M."/>
            <person name="Ren Q."/>
            <person name="Zhu H."/>
            <person name="Qi S."/>
            <person name="Kenton S.M."/>
            <person name="Lai H."/>
            <person name="White J.D."/>
            <person name="Clifton S."/>
            <person name="Roe B.A."/>
            <person name="Dyer D.W."/>
        </authorList>
    </citation>
    <scope>NUCLEOTIDE SEQUENCE [LARGE SCALE GENOMIC DNA]</scope>
    <source>
        <strain>ATCC 700825 / FA 1090</strain>
    </source>
</reference>
<keyword id="KW-1185">Reference proteome</keyword>
<keyword id="KW-0687">Ribonucleoprotein</keyword>
<keyword id="KW-0689">Ribosomal protein</keyword>
<comment type="similarity">
    <text evidence="1">Belongs to the bacterial ribosomal protein bS21 family.</text>
</comment>
<dbReference type="EMBL" id="AE004969">
    <property type="protein sequence ID" value="AAW90731.1"/>
    <property type="molecule type" value="Genomic_DNA"/>
</dbReference>
<dbReference type="RefSeq" id="WP_002214819.1">
    <property type="nucleotide sequence ID" value="NC_002946.2"/>
</dbReference>
<dbReference type="RefSeq" id="YP_209143.1">
    <property type="nucleotide sequence ID" value="NC_002946.2"/>
</dbReference>
<dbReference type="SMR" id="Q5F506"/>
<dbReference type="STRING" id="242231.NGO_2134"/>
<dbReference type="DNASU" id="3282787"/>
<dbReference type="GeneID" id="93386856"/>
<dbReference type="KEGG" id="ngo:NGO_2134"/>
<dbReference type="PATRIC" id="fig|242231.10.peg.2581"/>
<dbReference type="HOGENOM" id="CLU_159258_1_1_4"/>
<dbReference type="PRO" id="PR:Q5F506"/>
<dbReference type="Proteomes" id="UP000000535">
    <property type="component" value="Chromosome"/>
</dbReference>
<dbReference type="GO" id="GO:1990904">
    <property type="term" value="C:ribonucleoprotein complex"/>
    <property type="evidence" value="ECO:0007669"/>
    <property type="project" value="UniProtKB-KW"/>
</dbReference>
<dbReference type="GO" id="GO:0005840">
    <property type="term" value="C:ribosome"/>
    <property type="evidence" value="ECO:0007669"/>
    <property type="project" value="UniProtKB-KW"/>
</dbReference>
<dbReference type="GO" id="GO:0003735">
    <property type="term" value="F:structural constituent of ribosome"/>
    <property type="evidence" value="ECO:0007669"/>
    <property type="project" value="InterPro"/>
</dbReference>
<dbReference type="GO" id="GO:0006412">
    <property type="term" value="P:translation"/>
    <property type="evidence" value="ECO:0007669"/>
    <property type="project" value="UniProtKB-UniRule"/>
</dbReference>
<dbReference type="Gene3D" id="1.20.5.1150">
    <property type="entry name" value="Ribosomal protein S8"/>
    <property type="match status" value="1"/>
</dbReference>
<dbReference type="HAMAP" id="MF_00358">
    <property type="entry name" value="Ribosomal_bS21"/>
    <property type="match status" value="1"/>
</dbReference>
<dbReference type="InterPro" id="IPR001911">
    <property type="entry name" value="Ribosomal_bS21"/>
</dbReference>
<dbReference type="InterPro" id="IPR038380">
    <property type="entry name" value="Ribosomal_bS21_sf"/>
</dbReference>
<dbReference type="NCBIfam" id="TIGR00030">
    <property type="entry name" value="S21p"/>
    <property type="match status" value="1"/>
</dbReference>
<dbReference type="PANTHER" id="PTHR21109">
    <property type="entry name" value="MITOCHONDRIAL 28S RIBOSOMAL PROTEIN S21"/>
    <property type="match status" value="1"/>
</dbReference>
<dbReference type="PANTHER" id="PTHR21109:SF22">
    <property type="entry name" value="SMALL RIBOSOMAL SUBUNIT PROTEIN BS21"/>
    <property type="match status" value="1"/>
</dbReference>
<dbReference type="Pfam" id="PF01165">
    <property type="entry name" value="Ribosomal_S21"/>
    <property type="match status" value="1"/>
</dbReference>
<dbReference type="PRINTS" id="PR00976">
    <property type="entry name" value="RIBOSOMALS21"/>
</dbReference>
<proteinExistence type="inferred from homology"/>
<accession>Q5F506</accession>
<name>RS21_NEIG1</name>